<evidence type="ECO:0000250" key="1"/>
<evidence type="ECO:0000255" key="2"/>
<evidence type="ECO:0000255" key="3">
    <source>
        <dbReference type="PROSITE-ProRule" id="PRU00448"/>
    </source>
</evidence>
<evidence type="ECO:0000255" key="4">
    <source>
        <dbReference type="PROSITE-ProRule" id="PRU00716"/>
    </source>
</evidence>
<evidence type="ECO:0000256" key="5">
    <source>
        <dbReference type="SAM" id="MobiDB-lite"/>
    </source>
</evidence>
<evidence type="ECO:0000269" key="6">
    <source>
    </source>
</evidence>
<evidence type="ECO:0000305" key="7"/>
<proteinExistence type="evidence at protein level"/>
<reference key="1">
    <citation type="journal article" date="2006" name="Plant Physiol.">
        <title>Rewiring mitogen-activated protein kinase cascade by positive feedback confers potato blight resistance.</title>
        <authorList>
            <person name="Yamamizo C."/>
            <person name="Kuchimura K."/>
            <person name="Kobayashi A."/>
            <person name="Katou S."/>
            <person name="Kawakita K."/>
            <person name="Jones J.D.G."/>
            <person name="Doke N."/>
            <person name="Yoshioka H."/>
        </authorList>
    </citation>
    <scope>NUCLEOTIDE SEQUENCE [MRNA]</scope>
</reference>
<reference key="2">
    <citation type="journal article" date="2007" name="Plant Cell">
        <title>Calcium-dependent protein kinases regulate the production of reactive oxygen species by potato NADPH oxidase.</title>
        <authorList>
            <person name="Kobayashi M."/>
            <person name="Ohura I."/>
            <person name="Kawakita K."/>
            <person name="Yokota N."/>
            <person name="Fujiwara M."/>
            <person name="Shimamoto K."/>
            <person name="Doke N."/>
            <person name="Yoshioka H."/>
        </authorList>
    </citation>
    <scope>PHOSPHORYLATION</scope>
    <scope>TISSUE SPECIFICITY</scope>
</reference>
<organism>
    <name type="scientific">Solanum tuberosum</name>
    <name type="common">Potato</name>
    <dbReference type="NCBI Taxonomy" id="4113"/>
    <lineage>
        <taxon>Eukaryota</taxon>
        <taxon>Viridiplantae</taxon>
        <taxon>Streptophyta</taxon>
        <taxon>Embryophyta</taxon>
        <taxon>Tracheophyta</taxon>
        <taxon>Spermatophyta</taxon>
        <taxon>Magnoliopsida</taxon>
        <taxon>eudicotyledons</taxon>
        <taxon>Gunneridae</taxon>
        <taxon>Pentapetalae</taxon>
        <taxon>asterids</taxon>
        <taxon>lamiids</taxon>
        <taxon>Solanales</taxon>
        <taxon>Solanaceae</taxon>
        <taxon>Solanoideae</taxon>
        <taxon>Solaneae</taxon>
        <taxon>Solanum</taxon>
    </lineage>
</organism>
<sequence length="938" mass="105302">MQNSENHHPHHHHHHSDTEIIGNDRASYSGPLSGPLNKRGGKKSARFNIPESTDIGTSAGAGAKSNDDAYVEITLDVREDSVAVHSVKTAGGADVEDPELALLAKGLEKKSTLGASLVRNASSRIRQVSQELKRLASLNKRPIPTGRFDRNKSAAAHALKGLKFISKTDGGAGWAAVEKRFDEITAPTTGLLPRAKFGECIGMNKESKEFAGELYDALARRRNITTDSINKAQLKEFWDQVADQSFDTRLQTFFDMVDKDADGRITEEEVREIIGLSASANRLSTIQKQSDEYAAMIMEELDPNNLGYIMIENLEMLLLQAPNQSVQRGGESRNLSQMLSQKLKHTQEPNPLVRWYKSFMYFLLDNWQRVWVLLLWIGIMAVLFTWKYIQYKQKAAYDVMGPCVCLAKGAAETIKLNMAIILLPVCRNTITWLRNKTRLGSAVPFDDNLNFHKVIAVAIALGVAIHGLAHLTCDFPKLLNASEEAYEPMIYYFGEQPESYWWFVRGVEGVTGIIMVVLMAIAFTLATPWFRRGRVSFPKPFHKLTGFNAFWYSHHLFIIVYTLLIVHGEKLYITKDWYKRSTWMYLTVPLVLYAGERLLRAFRSSIKAVKILKVAVYPGNVLALHMSKPQGYKYKSGQYMFVNCAAVSPFEWHPFSITSAPGDDHLSVHIRTLGDWTRQLKTVFSEVCQPPPNGKSGLLRADYLQGENNPNFPRVLIDGPYGAPAQDYKQYEVVLLVGLGIGATPMISIVKDIVNNMKAMDEEENSLENGNGMSNAAQNASPNMAQKRGKSSSASGGNSFNTRRAYFYWVTREQGSFDWFKGIMNEAAEMDHKGVIEMHNYCTSVYEEGDARSALITMLQSLHHAKSGVDIVSGTRVKSHFAKPNWRNVYKRIALNHPEAKVGVFYCGAPALTKELKQHALNFSHKTSTKFDFHKENF</sequence>
<comment type="function">
    <text>Calcium-dependent NADPH oxidase that generates superoxide. May be responsible for the oxidative burst in response to pathogen attack in the leaves.</text>
</comment>
<comment type="subunit">
    <text evidence="1">Monomer and homodimer.</text>
</comment>
<comment type="subcellular location">
    <subcellularLocation>
        <location evidence="7">Membrane</location>
        <topology evidence="7">Multi-pass membrane protein</topology>
    </subcellularLocation>
</comment>
<comment type="tissue specificity">
    <text evidence="6">Expressed in leaves.</text>
</comment>
<comment type="PTM">
    <text evidence="6">Phosphorylated by CPK.</text>
</comment>
<comment type="similarity">
    <text evidence="7">Belongs to the RBOH (TC 5.B.1.3) family.</text>
</comment>
<dbReference type="EC" id="1.11.1.-"/>
<dbReference type="EC" id="1.6.3.-"/>
<dbReference type="EMBL" id="AB198716">
    <property type="protein sequence ID" value="BAE79344.2"/>
    <property type="molecule type" value="mRNA"/>
</dbReference>
<dbReference type="RefSeq" id="NP_001275453.1">
    <property type="nucleotide sequence ID" value="NM_001288524.1"/>
</dbReference>
<dbReference type="SMR" id="Q2HXL0"/>
<dbReference type="FunCoup" id="Q2HXL0">
    <property type="interactions" value="689"/>
</dbReference>
<dbReference type="STRING" id="4113.Q2HXL0"/>
<dbReference type="PeroxiBase" id="4547">
    <property type="entry name" value="StRboh03"/>
</dbReference>
<dbReference type="PaxDb" id="4113-PGSC0003DMT400036734"/>
<dbReference type="GeneID" id="102598898"/>
<dbReference type="KEGG" id="sot:102598898"/>
<dbReference type="eggNOG" id="KOG0039">
    <property type="taxonomic scope" value="Eukaryota"/>
</dbReference>
<dbReference type="InParanoid" id="Q2HXL0"/>
<dbReference type="OrthoDB" id="167398at2759"/>
<dbReference type="Proteomes" id="UP000011115">
    <property type="component" value="Unassembled WGS sequence"/>
</dbReference>
<dbReference type="ExpressionAtlas" id="Q2HXL0">
    <property type="expression patterns" value="baseline and differential"/>
</dbReference>
<dbReference type="GO" id="GO:0005886">
    <property type="term" value="C:plasma membrane"/>
    <property type="evidence" value="ECO:0000318"/>
    <property type="project" value="GO_Central"/>
</dbReference>
<dbReference type="GO" id="GO:0005509">
    <property type="term" value="F:calcium ion binding"/>
    <property type="evidence" value="ECO:0007669"/>
    <property type="project" value="InterPro"/>
</dbReference>
<dbReference type="GO" id="GO:0016174">
    <property type="term" value="F:NAD(P)H oxidase H2O2-forming activity"/>
    <property type="evidence" value="ECO:0000318"/>
    <property type="project" value="GO_Central"/>
</dbReference>
<dbReference type="GO" id="GO:0004601">
    <property type="term" value="F:peroxidase activity"/>
    <property type="evidence" value="ECO:0007669"/>
    <property type="project" value="UniProtKB-KW"/>
</dbReference>
<dbReference type="CDD" id="cd00051">
    <property type="entry name" value="EFh"/>
    <property type="match status" value="1"/>
</dbReference>
<dbReference type="CDD" id="cd06186">
    <property type="entry name" value="NOX_Duox_like_FAD_NADP"/>
    <property type="match status" value="1"/>
</dbReference>
<dbReference type="FunFam" id="1.10.238.10:FF:000049">
    <property type="entry name" value="Respiratory burst oxidase homolog A"/>
    <property type="match status" value="1"/>
</dbReference>
<dbReference type="FunFam" id="2.40.30.10:FF:000019">
    <property type="entry name" value="Respiratory burst oxidase homolog A"/>
    <property type="match status" value="1"/>
</dbReference>
<dbReference type="FunFam" id="3.40.50.80:FF:000007">
    <property type="entry name" value="Respiratory burst oxidase protein A"/>
    <property type="match status" value="1"/>
</dbReference>
<dbReference type="Gene3D" id="1.10.238.10">
    <property type="entry name" value="EF-hand"/>
    <property type="match status" value="1"/>
</dbReference>
<dbReference type="Gene3D" id="3.40.50.80">
    <property type="entry name" value="Nucleotide-binding domain of ferredoxin-NADP reductase (FNR) module"/>
    <property type="match status" value="1"/>
</dbReference>
<dbReference type="Gene3D" id="2.40.30.10">
    <property type="entry name" value="Translation factors"/>
    <property type="match status" value="1"/>
</dbReference>
<dbReference type="InterPro" id="IPR000778">
    <property type="entry name" value="Cyt_b245_heavy_chain"/>
</dbReference>
<dbReference type="InterPro" id="IPR011992">
    <property type="entry name" value="EF-hand-dom_pair"/>
</dbReference>
<dbReference type="InterPro" id="IPR018247">
    <property type="entry name" value="EF_Hand_1_Ca_BS"/>
</dbReference>
<dbReference type="InterPro" id="IPR002048">
    <property type="entry name" value="EF_hand_dom"/>
</dbReference>
<dbReference type="InterPro" id="IPR013112">
    <property type="entry name" value="FAD-bd_8"/>
</dbReference>
<dbReference type="InterPro" id="IPR017927">
    <property type="entry name" value="FAD-bd_FR_type"/>
</dbReference>
<dbReference type="InterPro" id="IPR013130">
    <property type="entry name" value="Fe3_Rdtase_TM_dom"/>
</dbReference>
<dbReference type="InterPro" id="IPR013121">
    <property type="entry name" value="Fe_red_NAD-bd_6"/>
</dbReference>
<dbReference type="InterPro" id="IPR039261">
    <property type="entry name" value="FNR_nucleotide-bd"/>
</dbReference>
<dbReference type="InterPro" id="IPR013623">
    <property type="entry name" value="NADPH_Ox"/>
</dbReference>
<dbReference type="InterPro" id="IPR050369">
    <property type="entry name" value="RBOH/FRE"/>
</dbReference>
<dbReference type="InterPro" id="IPR017938">
    <property type="entry name" value="Riboflavin_synthase-like_b-brl"/>
</dbReference>
<dbReference type="PANTHER" id="PTHR11972">
    <property type="entry name" value="NADPH OXIDASE"/>
    <property type="match status" value="1"/>
</dbReference>
<dbReference type="PANTHER" id="PTHR11972:SF189">
    <property type="entry name" value="RESPIRATORY BURST OXIDASE HOMOLOG PROTEIN C"/>
    <property type="match status" value="1"/>
</dbReference>
<dbReference type="Pfam" id="PF08022">
    <property type="entry name" value="FAD_binding_8"/>
    <property type="match status" value="1"/>
</dbReference>
<dbReference type="Pfam" id="PF01794">
    <property type="entry name" value="Ferric_reduct"/>
    <property type="match status" value="1"/>
</dbReference>
<dbReference type="Pfam" id="PF08030">
    <property type="entry name" value="NAD_binding_6"/>
    <property type="match status" value="1"/>
</dbReference>
<dbReference type="Pfam" id="PF08414">
    <property type="entry name" value="NADPH_Ox"/>
    <property type="match status" value="1"/>
</dbReference>
<dbReference type="PRINTS" id="PR00466">
    <property type="entry name" value="GP91PHOX"/>
</dbReference>
<dbReference type="SFLD" id="SFLDG01169">
    <property type="entry name" value="NADPH_oxidase_subgroup_(NOX)"/>
    <property type="match status" value="1"/>
</dbReference>
<dbReference type="SUPFAM" id="SSF47473">
    <property type="entry name" value="EF-hand"/>
    <property type="match status" value="1"/>
</dbReference>
<dbReference type="SUPFAM" id="SSF52343">
    <property type="entry name" value="Ferredoxin reductase-like, C-terminal NADP-linked domain"/>
    <property type="match status" value="1"/>
</dbReference>
<dbReference type="SUPFAM" id="SSF63380">
    <property type="entry name" value="Riboflavin synthase domain-like"/>
    <property type="match status" value="1"/>
</dbReference>
<dbReference type="PROSITE" id="PS00018">
    <property type="entry name" value="EF_HAND_1"/>
    <property type="match status" value="1"/>
</dbReference>
<dbReference type="PROSITE" id="PS50222">
    <property type="entry name" value="EF_HAND_2"/>
    <property type="match status" value="2"/>
</dbReference>
<dbReference type="PROSITE" id="PS51384">
    <property type="entry name" value="FAD_FR"/>
    <property type="match status" value="1"/>
</dbReference>
<feature type="chain" id="PRO_0000313765" description="Respiratory burst oxidase homolog protein C">
    <location>
        <begin position="1"/>
        <end position="938"/>
    </location>
</feature>
<feature type="topological domain" description="Cytoplasmic" evidence="2">
    <location>
        <begin position="1"/>
        <end position="369"/>
    </location>
</feature>
<feature type="transmembrane region" description="Helical" evidence="2">
    <location>
        <begin position="370"/>
        <end position="390"/>
    </location>
</feature>
<feature type="topological domain" description="Extracellular" evidence="2">
    <location>
        <begin position="391"/>
        <end position="402"/>
    </location>
</feature>
<feature type="transmembrane region" description="Helical" evidence="2">
    <location>
        <begin position="403"/>
        <end position="423"/>
    </location>
</feature>
<feature type="topological domain" description="Cytoplasmic" evidence="2">
    <location>
        <begin position="424"/>
        <end position="454"/>
    </location>
</feature>
<feature type="transmembrane region" description="Helical" evidence="2">
    <location>
        <begin position="455"/>
        <end position="475"/>
    </location>
</feature>
<feature type="topological domain" description="Extracellular" evidence="2">
    <location>
        <begin position="476"/>
        <end position="509"/>
    </location>
</feature>
<feature type="transmembrane region" description="Helical" evidence="2">
    <location>
        <begin position="510"/>
        <end position="530"/>
    </location>
</feature>
<feature type="topological domain" description="Cytoplasmic" evidence="2">
    <location>
        <begin position="531"/>
        <end position="545"/>
    </location>
</feature>
<feature type="transmembrane region" description="Helical" evidence="2">
    <location>
        <begin position="546"/>
        <end position="566"/>
    </location>
</feature>
<feature type="topological domain" description="Extracellular" evidence="2">
    <location>
        <begin position="567"/>
        <end position="580"/>
    </location>
</feature>
<feature type="transmembrane region" description="Helical" evidence="2">
    <location>
        <begin position="581"/>
        <end position="599"/>
    </location>
</feature>
<feature type="topological domain" description="Cytoplasmic" evidence="2">
    <location>
        <begin position="600"/>
        <end position="732"/>
    </location>
</feature>
<feature type="transmembrane region" description="Helical" evidence="2">
    <location>
        <begin position="733"/>
        <end position="753"/>
    </location>
</feature>
<feature type="topological domain" description="Extracellular" evidence="2">
    <location>
        <begin position="754"/>
        <end position="938"/>
    </location>
</feature>
<feature type="domain" description="EF-hand 1" evidence="3">
    <location>
        <begin position="245"/>
        <end position="280"/>
    </location>
</feature>
<feature type="domain" description="EF-hand 2" evidence="3">
    <location>
        <begin position="289"/>
        <end position="324"/>
    </location>
</feature>
<feature type="domain" description="Ferric oxidoreductase">
    <location>
        <begin position="408"/>
        <end position="565"/>
    </location>
</feature>
<feature type="domain" description="FAD-binding FR-type" evidence="4">
    <location>
        <begin position="599"/>
        <end position="727"/>
    </location>
</feature>
<feature type="region of interest" description="Disordered" evidence="5">
    <location>
        <begin position="1"/>
        <end position="63"/>
    </location>
</feature>
<feature type="region of interest" description="EF-hand-like 1" evidence="1">
    <location>
        <begin position="185"/>
        <end position="195"/>
    </location>
</feature>
<feature type="region of interest" description="EF-hand-like 2" evidence="1">
    <location>
        <begin position="222"/>
        <end position="233"/>
    </location>
</feature>
<feature type="region of interest" description="Disordered" evidence="5">
    <location>
        <begin position="762"/>
        <end position="796"/>
    </location>
</feature>
<feature type="coiled-coil region" evidence="2">
    <location>
        <begin position="115"/>
        <end position="141"/>
    </location>
</feature>
<feature type="compositionally biased region" description="Polar residues" evidence="5">
    <location>
        <begin position="767"/>
        <end position="784"/>
    </location>
</feature>
<feature type="binding site" evidence="3">
    <location>
        <position position="258"/>
    </location>
    <ligand>
        <name>Ca(2+)</name>
        <dbReference type="ChEBI" id="CHEBI:29108"/>
    </ligand>
</feature>
<feature type="binding site" evidence="3">
    <location>
        <position position="260"/>
    </location>
    <ligand>
        <name>Ca(2+)</name>
        <dbReference type="ChEBI" id="CHEBI:29108"/>
    </ligand>
</feature>
<feature type="binding site" evidence="3">
    <location>
        <position position="262"/>
    </location>
    <ligand>
        <name>Ca(2+)</name>
        <dbReference type="ChEBI" id="CHEBI:29108"/>
    </ligand>
</feature>
<feature type="binding site" evidence="3">
    <location>
        <position position="264"/>
    </location>
    <ligand>
        <name>Ca(2+)</name>
        <dbReference type="ChEBI" id="CHEBI:29108"/>
    </ligand>
</feature>
<feature type="binding site" evidence="3">
    <location>
        <position position="269"/>
    </location>
    <ligand>
        <name>Ca(2+)</name>
        <dbReference type="ChEBI" id="CHEBI:29108"/>
    </ligand>
</feature>
<protein>
    <recommendedName>
        <fullName>Respiratory burst oxidase homolog protein C</fullName>
        <ecNumber>1.11.1.-</ecNumber>
        <ecNumber>1.6.3.-</ecNumber>
    </recommendedName>
    <alternativeName>
        <fullName>NADPH oxidase RBOHC</fullName>
    </alternativeName>
    <alternativeName>
        <fullName>StRBOHC</fullName>
    </alternativeName>
</protein>
<name>RBOHC_SOLTU</name>
<keyword id="KW-0106">Calcium</keyword>
<keyword id="KW-0175">Coiled coil</keyword>
<keyword id="KW-0274">FAD</keyword>
<keyword id="KW-0285">Flavoprotein</keyword>
<keyword id="KW-0472">Membrane</keyword>
<keyword id="KW-0479">Metal-binding</keyword>
<keyword id="KW-0521">NADP</keyword>
<keyword id="KW-0560">Oxidoreductase</keyword>
<keyword id="KW-0575">Peroxidase</keyword>
<keyword id="KW-0597">Phosphoprotein</keyword>
<keyword id="KW-1185">Reference proteome</keyword>
<keyword id="KW-0677">Repeat</keyword>
<keyword id="KW-0812">Transmembrane</keyword>
<keyword id="KW-1133">Transmembrane helix</keyword>
<gene>
    <name type="primary">RBOHC</name>
</gene>
<accession>Q2HXL0</accession>